<gene>
    <name evidence="1" type="primary">obg</name>
    <name type="ordered locus">UUR10_0505</name>
</gene>
<reference key="1">
    <citation type="submission" date="2008-10" db="EMBL/GenBank/DDBJ databases">
        <title>Genome sequence of Ureaplasma urealyticum serovar 10 ATCC-33699.</title>
        <authorList>
            <person name="Shrivastava S."/>
            <person name="Methe B.A."/>
            <person name="Glass J."/>
            <person name="White K."/>
            <person name="Duffy L.B."/>
        </authorList>
    </citation>
    <scope>NUCLEOTIDE SEQUENCE [LARGE SCALE GENOMIC DNA]</scope>
    <source>
        <strain>ATCC 33699 / Western</strain>
    </source>
</reference>
<comment type="function">
    <text evidence="1">An essential GTPase which binds GTP, GDP and possibly (p)ppGpp with moderate affinity, with high nucleotide exchange rates and a fairly low GTP hydrolysis rate. Plays a role in control of the cell cycle, stress response, ribosome biogenesis and in those bacteria that undergo differentiation, in morphogenesis control.</text>
</comment>
<comment type="cofactor">
    <cofactor evidence="1">
        <name>Mg(2+)</name>
        <dbReference type="ChEBI" id="CHEBI:18420"/>
    </cofactor>
</comment>
<comment type="subunit">
    <text evidence="1">Monomer.</text>
</comment>
<comment type="subcellular location">
    <subcellularLocation>
        <location evidence="1">Cytoplasm</location>
    </subcellularLocation>
</comment>
<comment type="similarity">
    <text evidence="1">Belongs to the TRAFAC class OBG-HflX-like GTPase superfamily. OBG GTPase family.</text>
</comment>
<proteinExistence type="inferred from homology"/>
<keyword id="KW-0963">Cytoplasm</keyword>
<keyword id="KW-0342">GTP-binding</keyword>
<keyword id="KW-0378">Hydrolase</keyword>
<keyword id="KW-0460">Magnesium</keyword>
<keyword id="KW-0479">Metal-binding</keyword>
<keyword id="KW-0547">Nucleotide-binding</keyword>
<sequence length="435" mass="48618">MAFIDKCKIVLIAGNGGDGIVSWRRETHVPEGGPAGGNGGNGGSIWFVGNHNETSLEFLKYKKIIRAKHGEKGDIKNQHGANAEDVFINVPLGTVVYDAITNEILADINIDQQKYLVAQGGLGGHGNTHFKSAFNKAPNLYELGELGENIEVVLELKTIADIGIIGLPNAGKSTLISSFTNAKPKTANYMFTTLNPVLGTIYRDQNRIIFADIPGLIEGAHTGVGLGHDFLKHIERCFLLIHLISLDPNDNSDIISAYETIVNELKQYKQSLVNKPIVLVANKIDQIGALENLQILKEHLKDNQYIKVISALTNLHVDAMLDDVIKIYFDQKKIYEQRLKEHLPVDQILKWASDTPKNKELDKTIKIVKVDDHFFEVFGEYLKYWVHRIPLKTQDNLIRFNQKLQSINFNQQLLQAGAIAGDSIKIYDITLEFEE</sequence>
<evidence type="ECO:0000255" key="1">
    <source>
        <dbReference type="HAMAP-Rule" id="MF_01454"/>
    </source>
</evidence>
<evidence type="ECO:0000255" key="2">
    <source>
        <dbReference type="PROSITE-ProRule" id="PRU01229"/>
    </source>
</evidence>
<evidence type="ECO:0000255" key="3">
    <source>
        <dbReference type="PROSITE-ProRule" id="PRU01231"/>
    </source>
</evidence>
<name>OBG_UREU1</name>
<organism>
    <name type="scientific">Ureaplasma urealyticum serovar 10 (strain ATCC 33699 / Western)</name>
    <dbReference type="NCBI Taxonomy" id="565575"/>
    <lineage>
        <taxon>Bacteria</taxon>
        <taxon>Bacillati</taxon>
        <taxon>Mycoplasmatota</taxon>
        <taxon>Mycoplasmoidales</taxon>
        <taxon>Mycoplasmoidaceae</taxon>
        <taxon>Ureaplasma</taxon>
    </lineage>
</organism>
<protein>
    <recommendedName>
        <fullName evidence="1">GTPase Obg</fullName>
        <ecNumber evidence="1">3.6.5.-</ecNumber>
    </recommendedName>
    <alternativeName>
        <fullName evidence="1">GTP-binding protein Obg</fullName>
    </alternativeName>
</protein>
<accession>B5ZBV6</accession>
<feature type="chain" id="PRO_0000386374" description="GTPase Obg">
    <location>
        <begin position="1"/>
        <end position="435"/>
    </location>
</feature>
<feature type="domain" description="Obg" evidence="3">
    <location>
        <begin position="1"/>
        <end position="159"/>
    </location>
</feature>
<feature type="domain" description="OBG-type G" evidence="1">
    <location>
        <begin position="160"/>
        <end position="329"/>
    </location>
</feature>
<feature type="domain" description="OCT" evidence="2">
    <location>
        <begin position="355"/>
        <end position="435"/>
    </location>
</feature>
<feature type="binding site" evidence="1">
    <location>
        <begin position="166"/>
        <end position="173"/>
    </location>
    <ligand>
        <name>GTP</name>
        <dbReference type="ChEBI" id="CHEBI:37565"/>
    </ligand>
</feature>
<feature type="binding site" evidence="1">
    <location>
        <position position="173"/>
    </location>
    <ligand>
        <name>Mg(2+)</name>
        <dbReference type="ChEBI" id="CHEBI:18420"/>
    </ligand>
</feature>
<feature type="binding site" evidence="1">
    <location>
        <begin position="191"/>
        <end position="195"/>
    </location>
    <ligand>
        <name>GTP</name>
        <dbReference type="ChEBI" id="CHEBI:37565"/>
    </ligand>
</feature>
<feature type="binding site" evidence="1">
    <location>
        <position position="193"/>
    </location>
    <ligand>
        <name>Mg(2+)</name>
        <dbReference type="ChEBI" id="CHEBI:18420"/>
    </ligand>
</feature>
<feature type="binding site" evidence="1">
    <location>
        <begin position="212"/>
        <end position="215"/>
    </location>
    <ligand>
        <name>GTP</name>
        <dbReference type="ChEBI" id="CHEBI:37565"/>
    </ligand>
</feature>
<feature type="binding site" evidence="1">
    <location>
        <begin position="282"/>
        <end position="285"/>
    </location>
    <ligand>
        <name>GTP</name>
        <dbReference type="ChEBI" id="CHEBI:37565"/>
    </ligand>
</feature>
<feature type="binding site" evidence="1">
    <location>
        <begin position="310"/>
        <end position="312"/>
    </location>
    <ligand>
        <name>GTP</name>
        <dbReference type="ChEBI" id="CHEBI:37565"/>
    </ligand>
</feature>
<dbReference type="EC" id="3.6.5.-" evidence="1"/>
<dbReference type="EMBL" id="CP001184">
    <property type="protein sequence ID" value="ACI59760.1"/>
    <property type="molecule type" value="Genomic_DNA"/>
</dbReference>
<dbReference type="RefSeq" id="WP_012560194.1">
    <property type="nucleotide sequence ID" value="NC_011374.1"/>
</dbReference>
<dbReference type="SMR" id="B5ZBV6"/>
<dbReference type="STRING" id="565575.UUR10_0505"/>
<dbReference type="KEGG" id="uue:UUR10_0505"/>
<dbReference type="eggNOG" id="COG0536">
    <property type="taxonomic scope" value="Bacteria"/>
</dbReference>
<dbReference type="HOGENOM" id="CLU_011747_2_1_14"/>
<dbReference type="OrthoDB" id="9807318at2"/>
<dbReference type="Proteomes" id="UP000002018">
    <property type="component" value="Chromosome"/>
</dbReference>
<dbReference type="GO" id="GO:0005737">
    <property type="term" value="C:cytoplasm"/>
    <property type="evidence" value="ECO:0007669"/>
    <property type="project" value="UniProtKB-SubCell"/>
</dbReference>
<dbReference type="GO" id="GO:0005525">
    <property type="term" value="F:GTP binding"/>
    <property type="evidence" value="ECO:0007669"/>
    <property type="project" value="UniProtKB-UniRule"/>
</dbReference>
<dbReference type="GO" id="GO:0003924">
    <property type="term" value="F:GTPase activity"/>
    <property type="evidence" value="ECO:0007669"/>
    <property type="project" value="UniProtKB-UniRule"/>
</dbReference>
<dbReference type="GO" id="GO:0000287">
    <property type="term" value="F:magnesium ion binding"/>
    <property type="evidence" value="ECO:0007669"/>
    <property type="project" value="InterPro"/>
</dbReference>
<dbReference type="GO" id="GO:0042254">
    <property type="term" value="P:ribosome biogenesis"/>
    <property type="evidence" value="ECO:0007669"/>
    <property type="project" value="UniProtKB-UniRule"/>
</dbReference>
<dbReference type="CDD" id="cd01898">
    <property type="entry name" value="Obg"/>
    <property type="match status" value="1"/>
</dbReference>
<dbReference type="FunFam" id="2.70.210.12:FF:000001">
    <property type="entry name" value="GTPase Obg"/>
    <property type="match status" value="1"/>
</dbReference>
<dbReference type="Gene3D" id="3.30.300.350">
    <property type="entry name" value="GTP-binding protein OBG, C-terminal domain"/>
    <property type="match status" value="1"/>
</dbReference>
<dbReference type="Gene3D" id="2.70.210.12">
    <property type="entry name" value="GTP1/OBG domain"/>
    <property type="match status" value="1"/>
</dbReference>
<dbReference type="Gene3D" id="3.40.50.300">
    <property type="entry name" value="P-loop containing nucleotide triphosphate hydrolases"/>
    <property type="match status" value="1"/>
</dbReference>
<dbReference type="HAMAP" id="MF_01454">
    <property type="entry name" value="GTPase_Obg"/>
    <property type="match status" value="1"/>
</dbReference>
<dbReference type="InterPro" id="IPR031167">
    <property type="entry name" value="G_OBG"/>
</dbReference>
<dbReference type="InterPro" id="IPR006073">
    <property type="entry name" value="GTP-bd"/>
</dbReference>
<dbReference type="InterPro" id="IPR014100">
    <property type="entry name" value="GTP-bd_Obg/CgtA"/>
</dbReference>
<dbReference type="InterPro" id="IPR036346">
    <property type="entry name" value="GTP-bd_prot_GTP1/OBG_C_sf"/>
</dbReference>
<dbReference type="InterPro" id="IPR006074">
    <property type="entry name" value="GTP1-OBG_CS"/>
</dbReference>
<dbReference type="InterPro" id="IPR006169">
    <property type="entry name" value="GTP1_OBG_dom"/>
</dbReference>
<dbReference type="InterPro" id="IPR036726">
    <property type="entry name" value="GTP1_OBG_dom_sf"/>
</dbReference>
<dbReference type="InterPro" id="IPR045086">
    <property type="entry name" value="OBG_GTPase"/>
</dbReference>
<dbReference type="InterPro" id="IPR015349">
    <property type="entry name" value="OCT_dom"/>
</dbReference>
<dbReference type="InterPro" id="IPR027417">
    <property type="entry name" value="P-loop_NTPase"/>
</dbReference>
<dbReference type="InterPro" id="IPR005225">
    <property type="entry name" value="Small_GTP-bd"/>
</dbReference>
<dbReference type="NCBIfam" id="TIGR02729">
    <property type="entry name" value="Obg_CgtA"/>
    <property type="match status" value="1"/>
</dbReference>
<dbReference type="NCBIfam" id="TIGR03595">
    <property type="entry name" value="Obg_CgtA_exten"/>
    <property type="match status" value="1"/>
</dbReference>
<dbReference type="NCBIfam" id="NF008955">
    <property type="entry name" value="PRK12297.1"/>
    <property type="match status" value="1"/>
</dbReference>
<dbReference type="NCBIfam" id="NF008956">
    <property type="entry name" value="PRK12299.1"/>
    <property type="match status" value="1"/>
</dbReference>
<dbReference type="NCBIfam" id="TIGR00231">
    <property type="entry name" value="small_GTP"/>
    <property type="match status" value="1"/>
</dbReference>
<dbReference type="PANTHER" id="PTHR11702">
    <property type="entry name" value="DEVELOPMENTALLY REGULATED GTP-BINDING PROTEIN-RELATED"/>
    <property type="match status" value="1"/>
</dbReference>
<dbReference type="PANTHER" id="PTHR11702:SF31">
    <property type="entry name" value="MITOCHONDRIAL RIBOSOME-ASSOCIATED GTPASE 2"/>
    <property type="match status" value="1"/>
</dbReference>
<dbReference type="Pfam" id="PF09269">
    <property type="entry name" value="DUF1967"/>
    <property type="match status" value="1"/>
</dbReference>
<dbReference type="Pfam" id="PF01018">
    <property type="entry name" value="GTP1_OBG"/>
    <property type="match status" value="1"/>
</dbReference>
<dbReference type="Pfam" id="PF01926">
    <property type="entry name" value="MMR_HSR1"/>
    <property type="match status" value="1"/>
</dbReference>
<dbReference type="PIRSF" id="PIRSF002401">
    <property type="entry name" value="GTP_bd_Obg/CgtA"/>
    <property type="match status" value="1"/>
</dbReference>
<dbReference type="PRINTS" id="PR00326">
    <property type="entry name" value="GTP1OBG"/>
</dbReference>
<dbReference type="SUPFAM" id="SSF102741">
    <property type="entry name" value="Obg GTP-binding protein C-terminal domain"/>
    <property type="match status" value="1"/>
</dbReference>
<dbReference type="SUPFAM" id="SSF82051">
    <property type="entry name" value="Obg GTP-binding protein N-terminal domain"/>
    <property type="match status" value="1"/>
</dbReference>
<dbReference type="SUPFAM" id="SSF52540">
    <property type="entry name" value="P-loop containing nucleoside triphosphate hydrolases"/>
    <property type="match status" value="1"/>
</dbReference>
<dbReference type="PROSITE" id="PS51710">
    <property type="entry name" value="G_OBG"/>
    <property type="match status" value="1"/>
</dbReference>
<dbReference type="PROSITE" id="PS00905">
    <property type="entry name" value="GTP1_OBG"/>
    <property type="match status" value="1"/>
</dbReference>
<dbReference type="PROSITE" id="PS51883">
    <property type="entry name" value="OBG"/>
    <property type="match status" value="1"/>
</dbReference>
<dbReference type="PROSITE" id="PS51881">
    <property type="entry name" value="OCT"/>
    <property type="match status" value="1"/>
</dbReference>